<keyword id="KW-1185">Reference proteome</keyword>
<keyword id="KW-0946">Virion</keyword>
<sequence>MSNRFDSKPKCRCVAKIDDNYENNCQSKYISKCEIPRNICQRKNIDFFYDFRLKYSDADFDYVFGNDGVVTQNFTGLTVNSVPFTQTVPIGNEHPKWLKFYKDAFPLYNDREVIFETEMSGVQVIDGNSIPEKMKPRIRNVDDDLRLASGALNVIDPNTWMVFDFFVTNTAIYAFYERLPFGKTSSTPSNTTSQFGNKSFHDKFTHNGSIHNGSIHNGSIHNGSHCNPNPDVPTDLGNYAAFSNAIWVARRSADDPLSQFSKLAIGIHKGKGLVTWYIDDIPVFTWDRIGYRMHDEYRMVDHGGIEGIVSPDSMRLGFGTFSLFDMNLPNDYDRGYVDPVVVLPDGPHREIARSALIQLDFAANYRETFPDPYTGLERPLADPAITFAYTLGETPDDNRAIKLFGQGAIIKLKYLRVYTRSPNAKPEFSRVNH</sequence>
<comment type="subcellular location">
    <subcellularLocation>
        <location evidence="1">Virion</location>
    </subcellularLocation>
</comment>
<organismHost>
    <name type="scientific">Acanthamoeba polyphaga</name>
    <name type="common">Amoeba</name>
    <dbReference type="NCBI Taxonomy" id="5757"/>
</organismHost>
<accession>Q5UQI1</accession>
<dbReference type="EMBL" id="AY653733">
    <property type="protein sequence ID" value="AAV51088.1"/>
    <property type="molecule type" value="Genomic_DNA"/>
</dbReference>
<dbReference type="KEGG" id="vg:9925493"/>
<dbReference type="OrthoDB" id="6302at10239"/>
<dbReference type="Proteomes" id="UP000001134">
    <property type="component" value="Genome"/>
</dbReference>
<dbReference type="GO" id="GO:0044423">
    <property type="term" value="C:virion component"/>
    <property type="evidence" value="ECO:0007669"/>
    <property type="project" value="UniProtKB-KW"/>
</dbReference>
<dbReference type="InterPro" id="IPR045727">
    <property type="entry name" value="DUF6081"/>
</dbReference>
<dbReference type="Pfam" id="PF19559">
    <property type="entry name" value="DUF6081"/>
    <property type="match status" value="2"/>
</dbReference>
<evidence type="ECO:0000269" key="1">
    <source>
    </source>
</evidence>
<reference key="1">
    <citation type="journal article" date="2004" name="Science">
        <title>The 1.2-megabase genome sequence of Mimivirus.</title>
        <authorList>
            <person name="Raoult D."/>
            <person name="Audic S."/>
            <person name="Robert C."/>
            <person name="Abergel C."/>
            <person name="Renesto P."/>
            <person name="Ogata H."/>
            <person name="La Scola B."/>
            <person name="Susan M."/>
            <person name="Claverie J.-M."/>
        </authorList>
    </citation>
    <scope>NUCLEOTIDE SEQUENCE [LARGE SCALE GENOMIC DNA]</scope>
    <source>
        <strain>Rowbotham-Bradford</strain>
    </source>
</reference>
<reference key="2">
    <citation type="journal article" date="2006" name="J. Virol.">
        <title>Mimivirus giant particles incorporate a large fraction of anonymous and unique gene products.</title>
        <authorList>
            <person name="Renesto P."/>
            <person name="Abergel C."/>
            <person name="Decloquement P."/>
            <person name="Moinier D."/>
            <person name="Azza S."/>
            <person name="Ogata H."/>
            <person name="Fourquet P."/>
            <person name="Gorvel J.-P."/>
            <person name="Claverie J.-M."/>
            <person name="Raoult D."/>
        </authorList>
    </citation>
    <scope>IDENTIFICATION BY MASS SPECTROMETRY [LARGE SCALE ANALYSIS]</scope>
    <scope>SUBCELLULAR LOCATION</scope>
</reference>
<proteinExistence type="evidence at protein level"/>
<protein>
    <recommendedName>
        <fullName>Uncharacterized protein L829</fullName>
    </recommendedName>
</protein>
<gene>
    <name type="ordered locus">MIMI_L829</name>
</gene>
<organism>
    <name type="scientific">Acanthamoeba polyphaga mimivirus</name>
    <name type="common">APMV</name>
    <dbReference type="NCBI Taxonomy" id="212035"/>
    <lineage>
        <taxon>Viruses</taxon>
        <taxon>Varidnaviria</taxon>
        <taxon>Bamfordvirae</taxon>
        <taxon>Nucleocytoviricota</taxon>
        <taxon>Megaviricetes</taxon>
        <taxon>Imitervirales</taxon>
        <taxon>Mimiviridae</taxon>
        <taxon>Megamimivirinae</taxon>
        <taxon>Mimivirus</taxon>
        <taxon>Mimivirus bradfordmassiliense</taxon>
    </lineage>
</organism>
<name>YL829_MIMIV</name>
<feature type="chain" id="PRO_0000251130" description="Uncharacterized protein L829">
    <location>
        <begin position="1"/>
        <end position="433"/>
    </location>
</feature>